<protein>
    <recommendedName>
        <fullName>Phosducin-like protein</fullName>
        <shortName>PHLP</shortName>
    </recommendedName>
</protein>
<keyword id="KW-0007">Acetylation</keyword>
<keyword id="KW-0966">Cell projection</keyword>
<keyword id="KW-0143">Chaperone</keyword>
<keyword id="KW-0970">Cilium biogenesis/degradation</keyword>
<keyword id="KW-0597">Phosphoprotein</keyword>
<keyword id="KW-1185">Reference proteome</keyword>
<keyword id="KW-0716">Sensory transduction</keyword>
<keyword id="KW-0844">Vision</keyword>
<proteinExistence type="evidence at protein level"/>
<gene>
    <name type="primary">Pdcl</name>
    <name type="synonym">PhLP1</name>
</gene>
<name>PHLP_MOUSE</name>
<evidence type="ECO:0000250" key="1"/>
<evidence type="ECO:0000250" key="2">
    <source>
        <dbReference type="UniProtKB" id="Q13371"/>
    </source>
</evidence>
<evidence type="ECO:0000250" key="3">
    <source>
        <dbReference type="UniProtKB" id="Q63737"/>
    </source>
</evidence>
<evidence type="ECO:0000255" key="4"/>
<evidence type="ECO:0000256" key="5">
    <source>
        <dbReference type="SAM" id="MobiDB-lite"/>
    </source>
</evidence>
<evidence type="ECO:0000269" key="6">
    <source>
    </source>
</evidence>
<evidence type="ECO:0000269" key="7">
    <source>
    </source>
</evidence>
<evidence type="ECO:0000305" key="8"/>
<evidence type="ECO:0007744" key="9">
    <source>
    </source>
</evidence>
<evidence type="ECO:0007744" key="10">
    <source>
    </source>
</evidence>
<organism>
    <name type="scientific">Mus musculus</name>
    <name type="common">Mouse</name>
    <dbReference type="NCBI Taxonomy" id="10090"/>
    <lineage>
        <taxon>Eukaryota</taxon>
        <taxon>Metazoa</taxon>
        <taxon>Chordata</taxon>
        <taxon>Craniata</taxon>
        <taxon>Vertebrata</taxon>
        <taxon>Euteleostomi</taxon>
        <taxon>Mammalia</taxon>
        <taxon>Eutheria</taxon>
        <taxon>Euarchontoglires</taxon>
        <taxon>Glires</taxon>
        <taxon>Rodentia</taxon>
        <taxon>Myomorpha</taxon>
        <taxon>Muroidea</taxon>
        <taxon>Muridae</taxon>
        <taxon>Murinae</taxon>
        <taxon>Mus</taxon>
        <taxon>Mus</taxon>
    </lineage>
</organism>
<sequence length="301" mass="34407">MTTLDDKLLGEKLQYYYSTSEDEDSDHEDKDRGRGAPAISSTPAEAELAGEGISINTGPKGVINDWRRFKQLETEQREEQCREMERLIKKLSMSCRSHLDEEEEQQKQKDLQEKISGKMTLKEFGTKDKNLDDEEFLQQYRKQRMEEMRQQFHKGPQFKQVFEIPSGEGFLDMIDKEQKSTLIMVHIYEDGVPGTEAMNGCMICLATEYPAVKFCRVRSSVIGASSRFTRNALPALLIYKAGELIGNFVRVTDQLGEDFFAVDLEAFLQEFGLLPEKEVLVLTSVRNSATCHSEDSDLEID</sequence>
<accession>Q9DBX2</accession>
<accession>Q3TKI0</accession>
<feature type="initiator methionine" description="Removed" evidence="2">
    <location>
        <position position="1"/>
    </location>
</feature>
<feature type="chain" id="PRO_0000163756" description="Phosducin-like protein">
    <location>
        <begin position="2"/>
        <end position="301"/>
    </location>
</feature>
<feature type="domain" description="Phosducin" evidence="4">
    <location>
        <begin position="36"/>
        <end position="299"/>
    </location>
</feature>
<feature type="region of interest" description="Disordered" evidence="5">
    <location>
        <begin position="17"/>
        <end position="60"/>
    </location>
</feature>
<feature type="region of interest" description="Thioredoxin fold" evidence="1">
    <location>
        <begin position="158"/>
        <end position="301"/>
    </location>
</feature>
<feature type="modified residue" description="N-acetylthreonine" evidence="2">
    <location>
        <position position="2"/>
    </location>
</feature>
<feature type="modified residue" description="Phosphoserine" evidence="3">
    <location>
        <position position="20"/>
    </location>
</feature>
<feature type="modified residue" description="Phosphoserine" evidence="9 10">
    <location>
        <position position="25"/>
    </location>
</feature>
<feature type="modified residue" description="Phosphoserine" evidence="2">
    <location>
        <position position="226"/>
    </location>
</feature>
<feature type="modified residue" description="Phosphoserine" evidence="2">
    <location>
        <position position="293"/>
    </location>
</feature>
<feature type="modified residue" description="Phosphoserine" evidence="2">
    <location>
        <position position="296"/>
    </location>
</feature>
<dbReference type="EMBL" id="AK004704">
    <property type="protein sequence ID" value="BAB23489.1"/>
    <property type="molecule type" value="mRNA"/>
</dbReference>
<dbReference type="EMBL" id="AK028668">
    <property type="protein sequence ID" value="BAC26056.1"/>
    <property type="molecule type" value="mRNA"/>
</dbReference>
<dbReference type="EMBL" id="AK028814">
    <property type="protein sequence ID" value="BAC26133.1"/>
    <property type="molecule type" value="mRNA"/>
</dbReference>
<dbReference type="EMBL" id="AK166983">
    <property type="protein sequence ID" value="BAE39165.1"/>
    <property type="molecule type" value="mRNA"/>
</dbReference>
<dbReference type="CCDS" id="CCDS15998.1"/>
<dbReference type="RefSeq" id="NP_080452.2">
    <property type="nucleotide sequence ID" value="NM_026176.3"/>
</dbReference>
<dbReference type="RefSeq" id="XP_006498315.1">
    <property type="nucleotide sequence ID" value="XM_006498252.1"/>
</dbReference>
<dbReference type="SMR" id="Q9DBX2"/>
<dbReference type="BioGRID" id="212208">
    <property type="interactions" value="7"/>
</dbReference>
<dbReference type="FunCoup" id="Q9DBX2">
    <property type="interactions" value="3003"/>
</dbReference>
<dbReference type="STRING" id="10090.ENSMUSP00000108562"/>
<dbReference type="GlyGen" id="Q9DBX2">
    <property type="glycosylation" value="1 site"/>
</dbReference>
<dbReference type="iPTMnet" id="Q9DBX2"/>
<dbReference type="PhosphoSitePlus" id="Q9DBX2"/>
<dbReference type="jPOST" id="Q9DBX2"/>
<dbReference type="PaxDb" id="10090-ENSMUSP00000108562"/>
<dbReference type="ProteomicsDB" id="289494"/>
<dbReference type="Pumba" id="Q9DBX2"/>
<dbReference type="Antibodypedia" id="16148">
    <property type="antibodies" value="142 antibodies from 31 providers"/>
</dbReference>
<dbReference type="DNASU" id="67466"/>
<dbReference type="Ensembl" id="ENSMUST00000009174.15">
    <property type="protein sequence ID" value="ENSMUSP00000009174.9"/>
    <property type="gene ID" value="ENSMUSG00000009030.15"/>
</dbReference>
<dbReference type="Ensembl" id="ENSMUST00000112940.8">
    <property type="protein sequence ID" value="ENSMUSP00000108562.2"/>
    <property type="gene ID" value="ENSMUSG00000009030.15"/>
</dbReference>
<dbReference type="GeneID" id="67466"/>
<dbReference type="KEGG" id="mmu:67466"/>
<dbReference type="UCSC" id="uc008jmp.2">
    <property type="organism name" value="mouse"/>
</dbReference>
<dbReference type="AGR" id="MGI:1914716"/>
<dbReference type="CTD" id="5082"/>
<dbReference type="MGI" id="MGI:1914716">
    <property type="gene designation" value="Pdcl"/>
</dbReference>
<dbReference type="VEuPathDB" id="HostDB:ENSMUSG00000009030"/>
<dbReference type="eggNOG" id="KOG3171">
    <property type="taxonomic scope" value="Eukaryota"/>
</dbReference>
<dbReference type="GeneTree" id="ENSGT00940000159569"/>
<dbReference type="HOGENOM" id="CLU_085598_0_0_1"/>
<dbReference type="InParanoid" id="Q9DBX2"/>
<dbReference type="OMA" id="GIIEMMP"/>
<dbReference type="OrthoDB" id="70588at2759"/>
<dbReference type="PhylomeDB" id="Q9DBX2"/>
<dbReference type="TreeFam" id="TF315179"/>
<dbReference type="Reactome" id="R-MMU-6814122">
    <property type="pathway name" value="Cooperation of PDCL (PhLP1) and TRiC/CCT in G-protein beta folding"/>
</dbReference>
<dbReference type="BioGRID-ORCS" id="67466">
    <property type="hits" value="20 hits in 80 CRISPR screens"/>
</dbReference>
<dbReference type="ChiTaRS" id="Pdcl">
    <property type="organism name" value="mouse"/>
</dbReference>
<dbReference type="PRO" id="PR:Q9DBX2"/>
<dbReference type="Proteomes" id="UP000000589">
    <property type="component" value="Chromosome 2"/>
</dbReference>
<dbReference type="RNAct" id="Q9DBX2">
    <property type="molecule type" value="protein"/>
</dbReference>
<dbReference type="Bgee" id="ENSMUSG00000009030">
    <property type="expression patterns" value="Expressed in pineal body and 249 other cell types or tissues"/>
</dbReference>
<dbReference type="ExpressionAtlas" id="Q9DBX2">
    <property type="expression patterns" value="baseline and differential"/>
</dbReference>
<dbReference type="GO" id="GO:0005929">
    <property type="term" value="C:cilium"/>
    <property type="evidence" value="ECO:0007669"/>
    <property type="project" value="UniProtKB-SubCell"/>
</dbReference>
<dbReference type="GO" id="GO:0005737">
    <property type="term" value="C:cytoplasm"/>
    <property type="evidence" value="ECO:0007669"/>
    <property type="project" value="Ensembl"/>
</dbReference>
<dbReference type="GO" id="GO:0030030">
    <property type="term" value="P:cell projection organization"/>
    <property type="evidence" value="ECO:0007669"/>
    <property type="project" value="UniProtKB-KW"/>
</dbReference>
<dbReference type="GO" id="GO:1902605">
    <property type="term" value="P:heterotrimeric G-protein complex assembly"/>
    <property type="evidence" value="ECO:0000315"/>
    <property type="project" value="MGI"/>
</dbReference>
<dbReference type="GO" id="GO:0045880">
    <property type="term" value="P:positive regulation of smoothened signaling pathway"/>
    <property type="evidence" value="ECO:0000315"/>
    <property type="project" value="UniProtKB"/>
</dbReference>
<dbReference type="GO" id="GO:0008277">
    <property type="term" value="P:regulation of G protein-coupled receptor signaling pathway"/>
    <property type="evidence" value="ECO:0007669"/>
    <property type="project" value="InterPro"/>
</dbReference>
<dbReference type="GO" id="GO:0007601">
    <property type="term" value="P:visual perception"/>
    <property type="evidence" value="ECO:0000315"/>
    <property type="project" value="MGI"/>
</dbReference>
<dbReference type="CDD" id="cd02987">
    <property type="entry name" value="Phd_like_Phd"/>
    <property type="match status" value="1"/>
</dbReference>
<dbReference type="FunFam" id="3.40.30.10:FF:000072">
    <property type="entry name" value="Phosducin like"/>
    <property type="match status" value="1"/>
</dbReference>
<dbReference type="Gene3D" id="3.40.30.10">
    <property type="entry name" value="Glutaredoxin"/>
    <property type="match status" value="1"/>
</dbReference>
<dbReference type="Gene3D" id="1.10.168.10">
    <property type="entry name" value="Phosducin, domain 2"/>
    <property type="match status" value="1"/>
</dbReference>
<dbReference type="InterPro" id="IPR001200">
    <property type="entry name" value="Phosducin"/>
</dbReference>
<dbReference type="InterPro" id="IPR051499">
    <property type="entry name" value="Phosducin-like_reg"/>
</dbReference>
<dbReference type="InterPro" id="IPR023196">
    <property type="entry name" value="Phosducin_N_dom_sf"/>
</dbReference>
<dbReference type="InterPro" id="IPR024253">
    <property type="entry name" value="Phosducin_thioredoxin-like_dom"/>
</dbReference>
<dbReference type="InterPro" id="IPR036249">
    <property type="entry name" value="Thioredoxin-like_sf"/>
</dbReference>
<dbReference type="PANTHER" id="PTHR46052">
    <property type="entry name" value="PHOSDUCIN-LIKE PROTEIN"/>
    <property type="match status" value="1"/>
</dbReference>
<dbReference type="PANTHER" id="PTHR46052:SF4">
    <property type="entry name" value="PHOSDUCIN-LIKE PROTEIN"/>
    <property type="match status" value="1"/>
</dbReference>
<dbReference type="Pfam" id="PF02114">
    <property type="entry name" value="Phosducin"/>
    <property type="match status" value="1"/>
</dbReference>
<dbReference type="PRINTS" id="PR00677">
    <property type="entry name" value="PHOSDUCIN"/>
</dbReference>
<dbReference type="SUPFAM" id="SSF52833">
    <property type="entry name" value="Thioredoxin-like"/>
    <property type="match status" value="1"/>
</dbReference>
<reference key="1">
    <citation type="journal article" date="2005" name="Science">
        <title>The transcriptional landscape of the mammalian genome.</title>
        <authorList>
            <person name="Carninci P."/>
            <person name="Kasukawa T."/>
            <person name="Katayama S."/>
            <person name="Gough J."/>
            <person name="Frith M.C."/>
            <person name="Maeda N."/>
            <person name="Oyama R."/>
            <person name="Ravasi T."/>
            <person name="Lenhard B."/>
            <person name="Wells C."/>
            <person name="Kodzius R."/>
            <person name="Shimokawa K."/>
            <person name="Bajic V.B."/>
            <person name="Brenner S.E."/>
            <person name="Batalov S."/>
            <person name="Forrest A.R."/>
            <person name="Zavolan M."/>
            <person name="Davis M.J."/>
            <person name="Wilming L.G."/>
            <person name="Aidinis V."/>
            <person name="Allen J.E."/>
            <person name="Ambesi-Impiombato A."/>
            <person name="Apweiler R."/>
            <person name="Aturaliya R.N."/>
            <person name="Bailey T.L."/>
            <person name="Bansal M."/>
            <person name="Baxter L."/>
            <person name="Beisel K.W."/>
            <person name="Bersano T."/>
            <person name="Bono H."/>
            <person name="Chalk A.M."/>
            <person name="Chiu K.P."/>
            <person name="Choudhary V."/>
            <person name="Christoffels A."/>
            <person name="Clutterbuck D.R."/>
            <person name="Crowe M.L."/>
            <person name="Dalla E."/>
            <person name="Dalrymple B.P."/>
            <person name="de Bono B."/>
            <person name="Della Gatta G."/>
            <person name="di Bernardo D."/>
            <person name="Down T."/>
            <person name="Engstrom P."/>
            <person name="Fagiolini M."/>
            <person name="Faulkner G."/>
            <person name="Fletcher C.F."/>
            <person name="Fukushima T."/>
            <person name="Furuno M."/>
            <person name="Futaki S."/>
            <person name="Gariboldi M."/>
            <person name="Georgii-Hemming P."/>
            <person name="Gingeras T.R."/>
            <person name="Gojobori T."/>
            <person name="Green R.E."/>
            <person name="Gustincich S."/>
            <person name="Harbers M."/>
            <person name="Hayashi Y."/>
            <person name="Hensch T.K."/>
            <person name="Hirokawa N."/>
            <person name="Hill D."/>
            <person name="Huminiecki L."/>
            <person name="Iacono M."/>
            <person name="Ikeo K."/>
            <person name="Iwama A."/>
            <person name="Ishikawa T."/>
            <person name="Jakt M."/>
            <person name="Kanapin A."/>
            <person name="Katoh M."/>
            <person name="Kawasawa Y."/>
            <person name="Kelso J."/>
            <person name="Kitamura H."/>
            <person name="Kitano H."/>
            <person name="Kollias G."/>
            <person name="Krishnan S.P."/>
            <person name="Kruger A."/>
            <person name="Kummerfeld S.K."/>
            <person name="Kurochkin I.V."/>
            <person name="Lareau L.F."/>
            <person name="Lazarevic D."/>
            <person name="Lipovich L."/>
            <person name="Liu J."/>
            <person name="Liuni S."/>
            <person name="McWilliam S."/>
            <person name="Madan Babu M."/>
            <person name="Madera M."/>
            <person name="Marchionni L."/>
            <person name="Matsuda H."/>
            <person name="Matsuzawa S."/>
            <person name="Miki H."/>
            <person name="Mignone F."/>
            <person name="Miyake S."/>
            <person name="Morris K."/>
            <person name="Mottagui-Tabar S."/>
            <person name="Mulder N."/>
            <person name="Nakano N."/>
            <person name="Nakauchi H."/>
            <person name="Ng P."/>
            <person name="Nilsson R."/>
            <person name="Nishiguchi S."/>
            <person name="Nishikawa S."/>
            <person name="Nori F."/>
            <person name="Ohara O."/>
            <person name="Okazaki Y."/>
            <person name="Orlando V."/>
            <person name="Pang K.C."/>
            <person name="Pavan W.J."/>
            <person name="Pavesi G."/>
            <person name="Pesole G."/>
            <person name="Petrovsky N."/>
            <person name="Piazza S."/>
            <person name="Reed J."/>
            <person name="Reid J.F."/>
            <person name="Ring B.Z."/>
            <person name="Ringwald M."/>
            <person name="Rost B."/>
            <person name="Ruan Y."/>
            <person name="Salzberg S.L."/>
            <person name="Sandelin A."/>
            <person name="Schneider C."/>
            <person name="Schoenbach C."/>
            <person name="Sekiguchi K."/>
            <person name="Semple C.A."/>
            <person name="Seno S."/>
            <person name="Sessa L."/>
            <person name="Sheng Y."/>
            <person name="Shibata Y."/>
            <person name="Shimada H."/>
            <person name="Shimada K."/>
            <person name="Silva D."/>
            <person name="Sinclair B."/>
            <person name="Sperling S."/>
            <person name="Stupka E."/>
            <person name="Sugiura K."/>
            <person name="Sultana R."/>
            <person name="Takenaka Y."/>
            <person name="Taki K."/>
            <person name="Tammoja K."/>
            <person name="Tan S.L."/>
            <person name="Tang S."/>
            <person name="Taylor M.S."/>
            <person name="Tegner J."/>
            <person name="Teichmann S.A."/>
            <person name="Ueda H.R."/>
            <person name="van Nimwegen E."/>
            <person name="Verardo R."/>
            <person name="Wei C.L."/>
            <person name="Yagi K."/>
            <person name="Yamanishi H."/>
            <person name="Zabarovsky E."/>
            <person name="Zhu S."/>
            <person name="Zimmer A."/>
            <person name="Hide W."/>
            <person name="Bult C."/>
            <person name="Grimmond S.M."/>
            <person name="Teasdale R.D."/>
            <person name="Liu E.T."/>
            <person name="Brusic V."/>
            <person name="Quackenbush J."/>
            <person name="Wahlestedt C."/>
            <person name="Mattick J.S."/>
            <person name="Hume D.A."/>
            <person name="Kai C."/>
            <person name="Sasaki D."/>
            <person name="Tomaru Y."/>
            <person name="Fukuda S."/>
            <person name="Kanamori-Katayama M."/>
            <person name="Suzuki M."/>
            <person name="Aoki J."/>
            <person name="Arakawa T."/>
            <person name="Iida J."/>
            <person name="Imamura K."/>
            <person name="Itoh M."/>
            <person name="Kato T."/>
            <person name="Kawaji H."/>
            <person name="Kawagashira N."/>
            <person name="Kawashima T."/>
            <person name="Kojima M."/>
            <person name="Kondo S."/>
            <person name="Konno H."/>
            <person name="Nakano K."/>
            <person name="Ninomiya N."/>
            <person name="Nishio T."/>
            <person name="Okada M."/>
            <person name="Plessy C."/>
            <person name="Shibata K."/>
            <person name="Shiraki T."/>
            <person name="Suzuki S."/>
            <person name="Tagami M."/>
            <person name="Waki K."/>
            <person name="Watahiki A."/>
            <person name="Okamura-Oho Y."/>
            <person name="Suzuki H."/>
            <person name="Kawai J."/>
            <person name="Hayashizaki Y."/>
        </authorList>
    </citation>
    <scope>NUCLEOTIDE SEQUENCE [LARGE SCALE MRNA]</scope>
    <source>
        <strain>C57BL/6J</strain>
        <tissue>Lung</tissue>
        <tissue>Skin</tissue>
    </source>
</reference>
<reference key="2">
    <citation type="journal article" date="2007" name="Proc. Natl. Acad. Sci. U.S.A.">
        <title>Large-scale phosphorylation analysis of mouse liver.</title>
        <authorList>
            <person name="Villen J."/>
            <person name="Beausoleil S.A."/>
            <person name="Gerber S.A."/>
            <person name="Gygi S.P."/>
        </authorList>
    </citation>
    <scope>PHOSPHORYLATION [LARGE SCALE ANALYSIS] AT SER-25</scope>
    <scope>IDENTIFICATION BY MASS SPECTROMETRY [LARGE SCALE ANALYSIS]</scope>
    <source>
        <tissue>Liver</tissue>
    </source>
</reference>
<reference key="3">
    <citation type="journal article" date="2010" name="Cell">
        <title>A tissue-specific atlas of mouse protein phosphorylation and expression.</title>
        <authorList>
            <person name="Huttlin E.L."/>
            <person name="Jedrychowski M.P."/>
            <person name="Elias J.E."/>
            <person name="Goswami T."/>
            <person name="Rad R."/>
            <person name="Beausoleil S.A."/>
            <person name="Villen J."/>
            <person name="Haas W."/>
            <person name="Sowa M.E."/>
            <person name="Gygi S.P."/>
        </authorList>
    </citation>
    <scope>PHOSPHORYLATION [LARGE SCALE ANALYSIS] AT SER-25</scope>
    <scope>IDENTIFICATION BY MASS SPECTROMETRY [LARGE SCALE ANALYSIS]</scope>
    <source>
        <tissue>Brain</tissue>
        <tissue>Brown adipose tissue</tissue>
        <tissue>Spleen</tissue>
    </source>
</reference>
<reference key="4">
    <citation type="journal article" date="2013" name="J. Neurosci.">
        <title>Phosducin-like protein 1 is essential for G-protein assembly and signaling in retinal rod photoreceptors.</title>
        <authorList>
            <person name="Lai C.W."/>
            <person name="Kolesnikov A.V."/>
            <person name="Frederick J.M."/>
            <person name="Blake D.R."/>
            <person name="Jiang L."/>
            <person name="Stewart J.S."/>
            <person name="Chen C.K."/>
            <person name="Barrow J.R."/>
            <person name="Baehr W."/>
            <person name="Kefalov V.J."/>
            <person name="Willardson B.M."/>
        </authorList>
    </citation>
    <scope>FUNCTION</scope>
    <scope>DISRUPTION PHENOTYPE</scope>
</reference>
<reference key="5">
    <citation type="journal article" date="2018" name="Dev. Cell">
        <title>CRISPR screens uncover genes that regulate target cell sensitivity to the morphogen sonic hedgehog.</title>
        <authorList>
            <person name="Pusapati G.V."/>
            <person name="Kong J.H."/>
            <person name="Patel B.B."/>
            <person name="Krishnan A."/>
            <person name="Sagner A."/>
            <person name="Kinnebrew M."/>
            <person name="Briscoe J."/>
            <person name="Aravind L."/>
            <person name="Rohatgi R."/>
        </authorList>
    </citation>
    <scope>FUNCTION</scope>
    <scope>SUBCELLULAR LOCATION</scope>
</reference>
<comment type="function">
    <text evidence="6 7">Functions as a co-chaperone for CCT in the assembly of heterotrimeric G protein complexes, facilitates the assembly of both Gbeta-Ggamma and RGS-Gbeta5 heterodimers (PubMed:23637185). Also acts as a positive regulator of hedgehog signaling and regulates ciliary function (PubMed:29290584).</text>
</comment>
<comment type="subunit">
    <text evidence="1">Forms a complex with the beta and gamma subunits of the GTP-binding protein, transducin. Interacts with the CCT chaperonin complex (By similarity).</text>
</comment>
<comment type="subcellular location">
    <subcellularLocation>
        <location evidence="7">Cell projection</location>
        <location evidence="7">Cilium</location>
    </subcellularLocation>
</comment>
<comment type="disruption phenotype">
    <text evidence="6">Conditional deletion in photoreceptor cells leads to 50-fold decrease in Gbeta-Ggamma dimer formation and more than 10-fold decrease in light sensitivity. A 20-fold reduction in Gbeta5 and RGS9-1 expression is also observed, causing a 15-fold delay in the shutoff of light responses.</text>
</comment>
<comment type="similarity">
    <text evidence="8">Belongs to the phosducin family.</text>
</comment>